<accession>P0DOO8</accession>
<accession>P33840</accession>
<protein>
    <recommendedName>
        <fullName>Core protein OPG142</fullName>
    </recommendedName>
</protein>
<comment type="function">
    <text evidence="1">Late protein which is a part of a large complex required for early virion morphogenesis. This complex participates in the formation of virosomes and the incorporation of virosomal contents into nascent immature virions. Required for the stability and kinase activity of OPG054.</text>
</comment>
<comment type="subunit">
    <text evidence="1">Part of a complex composed of the kinase OPG054, OPG092, OPG100, OPG114, OPG115, OPG142 and OPG157.</text>
</comment>
<comment type="subcellular location">
    <subcellularLocation>
        <location evidence="1">Host cytoplasm</location>
    </subcellularLocation>
    <subcellularLocation>
        <location evidence="1">Virion</location>
    </subcellularLocation>
    <text evidence="1">Localizes in cytoplasmic virus factories and present in the virion core.</text>
</comment>
<comment type="similarity">
    <text evidence="2">Belongs to the orthopoxvirus OPG142 family.</text>
</comment>
<name>PG142_VARV</name>
<feature type="chain" id="PRO_0000448154" description="Core protein OPG142">
    <location>
        <begin position="1"/>
        <end position="94"/>
    </location>
</feature>
<evidence type="ECO:0000250" key="1">
    <source>
        <dbReference type="UniProtKB" id="P68718"/>
    </source>
</evidence>
<evidence type="ECO:0000305" key="2"/>
<organism>
    <name type="scientific">Variola virus</name>
    <dbReference type="NCBI Taxonomy" id="10255"/>
    <lineage>
        <taxon>Viruses</taxon>
        <taxon>Varidnaviria</taxon>
        <taxon>Bamfordvirae</taxon>
        <taxon>Nucleocytoviricota</taxon>
        <taxon>Pokkesviricetes</taxon>
        <taxon>Chitovirales</taxon>
        <taxon>Poxviridae</taxon>
        <taxon>Chordopoxvirinae</taxon>
        <taxon>Orthopoxvirus</taxon>
    </lineage>
</organism>
<sequence>MFVDDDSLIIYSTWPSTLSDSSGRVIVMPDNRSFTFKEGFKLDESIKSILLVNPSSIDLLKIRVYKHRIKWMGNIFVLFEQENIPPPFRLVNDK</sequence>
<keyword id="KW-0067">ATP-binding</keyword>
<keyword id="KW-0238">DNA-binding</keyword>
<keyword id="KW-0347">Helicase</keyword>
<keyword id="KW-1035">Host cytoplasm</keyword>
<keyword id="KW-0378">Hydrolase</keyword>
<keyword id="KW-0426">Late protein</keyword>
<keyword id="KW-0547">Nucleotide-binding</keyword>
<keyword id="KW-0597">Phosphoprotein</keyword>
<keyword id="KW-0804">Transcription</keyword>
<keyword id="KW-0805">Transcription regulation</keyword>
<keyword id="KW-0806">Transcription termination</keyword>
<keyword id="KW-0946">Virion</keyword>
<proteinExistence type="inferred from homology"/>
<organismHost>
    <name type="scientific">Homo sapiens</name>
    <name type="common">Human</name>
    <dbReference type="NCBI Taxonomy" id="9606"/>
</organismHost>
<gene>
    <name type="primary">OPG142</name>
    <name type="ORF">A15L</name>
    <name type="ORF">A16L</name>
</gene>
<dbReference type="EMBL" id="L22579">
    <property type="protein sequence ID" value="AAA60867.1"/>
    <property type="molecule type" value="Genomic_DNA"/>
</dbReference>
<dbReference type="EMBL" id="X76268">
    <property type="protein sequence ID" value="CAA53888.1"/>
    <property type="molecule type" value="Genomic_DNA"/>
</dbReference>
<dbReference type="PIR" id="E72165">
    <property type="entry name" value="E72165"/>
</dbReference>
<dbReference type="PIR" id="T28557">
    <property type="entry name" value="T28557"/>
</dbReference>
<dbReference type="RefSeq" id="NP_042163.1">
    <property type="nucleotide sequence ID" value="NC_001611.1"/>
</dbReference>
<dbReference type="GeneID" id="1486490"/>
<dbReference type="KEGG" id="vg:1486490"/>
<dbReference type="Proteomes" id="UP000119805">
    <property type="component" value="Segment"/>
</dbReference>
<dbReference type="GO" id="GO:0030430">
    <property type="term" value="C:host cell cytoplasm"/>
    <property type="evidence" value="ECO:0007669"/>
    <property type="project" value="UniProtKB-SubCell"/>
</dbReference>
<dbReference type="GO" id="GO:0044423">
    <property type="term" value="C:virion component"/>
    <property type="evidence" value="ECO:0007669"/>
    <property type="project" value="UniProtKB-KW"/>
</dbReference>
<dbReference type="GO" id="GO:0005524">
    <property type="term" value="F:ATP binding"/>
    <property type="evidence" value="ECO:0007669"/>
    <property type="project" value="UniProtKB-KW"/>
</dbReference>
<dbReference type="GO" id="GO:0003677">
    <property type="term" value="F:DNA binding"/>
    <property type="evidence" value="ECO:0007669"/>
    <property type="project" value="UniProtKB-KW"/>
</dbReference>
<dbReference type="GO" id="GO:0004386">
    <property type="term" value="F:helicase activity"/>
    <property type="evidence" value="ECO:0007669"/>
    <property type="project" value="UniProtKB-KW"/>
</dbReference>
<dbReference type="GO" id="GO:0016787">
    <property type="term" value="F:hydrolase activity"/>
    <property type="evidence" value="ECO:0007669"/>
    <property type="project" value="UniProtKB-KW"/>
</dbReference>
<dbReference type="GO" id="GO:0006353">
    <property type="term" value="P:DNA-templated transcription termination"/>
    <property type="evidence" value="ECO:0007669"/>
    <property type="project" value="UniProtKB-KW"/>
</dbReference>
<dbReference type="InterPro" id="IPR008445">
    <property type="entry name" value="A15"/>
</dbReference>
<dbReference type="Pfam" id="PF05846">
    <property type="entry name" value="Chordopox_A15"/>
    <property type="match status" value="1"/>
</dbReference>
<reference key="1">
    <citation type="journal article" date="1993" name="Nature">
        <title>Potential virulence determinants in terminal regions of variola smallpox virus genome.</title>
        <authorList>
            <person name="Massung R.F."/>
            <person name="Esposito J.J."/>
            <person name="Liu L.I."/>
            <person name="Qi J."/>
            <person name="Utterback T.R."/>
            <person name="Knight J.C."/>
            <person name="Aubin L."/>
            <person name="Yuran T.E."/>
            <person name="Parsons J.M."/>
            <person name="Loparev V.N."/>
            <person name="Selivanov N.A."/>
            <person name="Cavallaro K.F."/>
            <person name="Kerlavage A.R."/>
            <person name="Mahy B.W.J."/>
            <person name="Venter J.C."/>
        </authorList>
    </citation>
    <scope>NUCLEOTIDE SEQUENCE [GENOMIC DNA]</scope>
    <source>
        <strain>Bangladesh-1975</strain>
    </source>
</reference>
<reference key="2">
    <citation type="submission" date="1995-12" db="EMBL/GenBank/DDBJ databases">
        <title>XhoI-D DNA fragment of Variola minor virus strain Garcia-1966.</title>
        <authorList>
            <person name="Shchelkunov S.N."/>
            <person name="Totmenin A.V."/>
            <person name="Sosnovtsev S.V."/>
            <person name="Safronov P.F."/>
            <person name="Resenchuk S.M."/>
            <person name="Blinov V.M."/>
            <person name="Sandakhchiev L.S."/>
        </authorList>
    </citation>
    <scope>NUCLEOTIDE SEQUENCE [GENOMIC DNA]</scope>
    <source>
        <strain>Garcia-1966</strain>
    </source>
</reference>